<name>RS20_LACDA</name>
<accession>Q1GAQ4</accession>
<keyword id="KW-1185">Reference proteome</keyword>
<keyword id="KW-0687">Ribonucleoprotein</keyword>
<keyword id="KW-0689">Ribosomal protein</keyword>
<keyword id="KW-0694">RNA-binding</keyword>
<keyword id="KW-0699">rRNA-binding</keyword>
<sequence length="83" mass="8962">MPQIKSAIKRVKTQAVANERNAAQLSTMRTAVKKFKAAQAAGADNASELYVAAIRELDKAASKGLIHKNKATRDKSRLAKLAK</sequence>
<proteinExistence type="inferred from homology"/>
<gene>
    <name evidence="1" type="primary">rpsT</name>
    <name type="ordered locus">Ldb0772</name>
</gene>
<reference key="1">
    <citation type="journal article" date="2006" name="Proc. Natl. Acad. Sci. U.S.A.">
        <title>The complete genome sequence of Lactobacillus bulgaricus reveals extensive and ongoing reductive evolution.</title>
        <authorList>
            <person name="van de Guchte M."/>
            <person name="Penaud S."/>
            <person name="Grimaldi C."/>
            <person name="Barbe V."/>
            <person name="Bryson K."/>
            <person name="Nicolas P."/>
            <person name="Robert C."/>
            <person name="Oztas S."/>
            <person name="Mangenot S."/>
            <person name="Couloux A."/>
            <person name="Loux V."/>
            <person name="Dervyn R."/>
            <person name="Bossy R."/>
            <person name="Bolotin A."/>
            <person name="Batto J.-M."/>
            <person name="Walunas T."/>
            <person name="Gibrat J.-F."/>
            <person name="Bessieres P."/>
            <person name="Weissenbach J."/>
            <person name="Ehrlich S.D."/>
            <person name="Maguin E."/>
        </authorList>
    </citation>
    <scope>NUCLEOTIDE SEQUENCE [LARGE SCALE GENOMIC DNA]</scope>
    <source>
        <strain>ATCC 11842 / DSM 20081 / BCRC 10696 / JCM 1002 / NBRC 13953 / NCIMB 11778 / NCTC 12712 / WDCM 00102 / Lb 14</strain>
    </source>
</reference>
<feature type="chain" id="PRO_0000260122" description="Small ribosomal subunit protein bS20">
    <location>
        <begin position="1"/>
        <end position="83"/>
    </location>
</feature>
<protein>
    <recommendedName>
        <fullName evidence="1">Small ribosomal subunit protein bS20</fullName>
    </recommendedName>
    <alternativeName>
        <fullName evidence="2">30S ribosomal protein S20</fullName>
    </alternativeName>
</protein>
<comment type="function">
    <text evidence="1">Binds directly to 16S ribosomal RNA.</text>
</comment>
<comment type="similarity">
    <text evidence="1">Belongs to the bacterial ribosomal protein bS20 family.</text>
</comment>
<dbReference type="EMBL" id="CR954253">
    <property type="protein sequence ID" value="CAI97599.1"/>
    <property type="molecule type" value="Genomic_DNA"/>
</dbReference>
<dbReference type="RefSeq" id="WP_011543792.1">
    <property type="nucleotide sequence ID" value="NZ_JQAV01000001.1"/>
</dbReference>
<dbReference type="SMR" id="Q1GAQ4"/>
<dbReference type="STRING" id="390333.Ldb0772"/>
<dbReference type="KEGG" id="ldb:Ldb0772"/>
<dbReference type="eggNOG" id="COG0268">
    <property type="taxonomic scope" value="Bacteria"/>
</dbReference>
<dbReference type="HOGENOM" id="CLU_160655_1_1_9"/>
<dbReference type="BioCyc" id="LDEL390333:LDB_RS03405-MONOMER"/>
<dbReference type="Proteomes" id="UP000001259">
    <property type="component" value="Chromosome"/>
</dbReference>
<dbReference type="GO" id="GO:0005829">
    <property type="term" value="C:cytosol"/>
    <property type="evidence" value="ECO:0007669"/>
    <property type="project" value="TreeGrafter"/>
</dbReference>
<dbReference type="GO" id="GO:0015935">
    <property type="term" value="C:small ribosomal subunit"/>
    <property type="evidence" value="ECO:0007669"/>
    <property type="project" value="TreeGrafter"/>
</dbReference>
<dbReference type="GO" id="GO:0070181">
    <property type="term" value="F:small ribosomal subunit rRNA binding"/>
    <property type="evidence" value="ECO:0007669"/>
    <property type="project" value="TreeGrafter"/>
</dbReference>
<dbReference type="GO" id="GO:0003735">
    <property type="term" value="F:structural constituent of ribosome"/>
    <property type="evidence" value="ECO:0007669"/>
    <property type="project" value="InterPro"/>
</dbReference>
<dbReference type="GO" id="GO:0006412">
    <property type="term" value="P:translation"/>
    <property type="evidence" value="ECO:0007669"/>
    <property type="project" value="UniProtKB-UniRule"/>
</dbReference>
<dbReference type="FunFam" id="1.20.58.110:FF:000001">
    <property type="entry name" value="30S ribosomal protein S20"/>
    <property type="match status" value="1"/>
</dbReference>
<dbReference type="Gene3D" id="1.20.58.110">
    <property type="entry name" value="Ribosomal protein S20"/>
    <property type="match status" value="1"/>
</dbReference>
<dbReference type="HAMAP" id="MF_00500">
    <property type="entry name" value="Ribosomal_bS20"/>
    <property type="match status" value="1"/>
</dbReference>
<dbReference type="InterPro" id="IPR002583">
    <property type="entry name" value="Ribosomal_bS20"/>
</dbReference>
<dbReference type="InterPro" id="IPR036510">
    <property type="entry name" value="Ribosomal_bS20_sf"/>
</dbReference>
<dbReference type="NCBIfam" id="TIGR00029">
    <property type="entry name" value="S20"/>
    <property type="match status" value="1"/>
</dbReference>
<dbReference type="PANTHER" id="PTHR33398">
    <property type="entry name" value="30S RIBOSOMAL PROTEIN S20"/>
    <property type="match status" value="1"/>
</dbReference>
<dbReference type="PANTHER" id="PTHR33398:SF1">
    <property type="entry name" value="SMALL RIBOSOMAL SUBUNIT PROTEIN BS20C"/>
    <property type="match status" value="1"/>
</dbReference>
<dbReference type="Pfam" id="PF01649">
    <property type="entry name" value="Ribosomal_S20p"/>
    <property type="match status" value="1"/>
</dbReference>
<dbReference type="SUPFAM" id="SSF46992">
    <property type="entry name" value="Ribosomal protein S20"/>
    <property type="match status" value="1"/>
</dbReference>
<organism>
    <name type="scientific">Lactobacillus delbrueckii subsp. bulgaricus (strain ATCC 11842 / DSM 20081 / BCRC 10696 / JCM 1002 / NBRC 13953 / NCIMB 11778 / NCTC 12712 / WDCM 00102 / Lb 14)</name>
    <dbReference type="NCBI Taxonomy" id="390333"/>
    <lineage>
        <taxon>Bacteria</taxon>
        <taxon>Bacillati</taxon>
        <taxon>Bacillota</taxon>
        <taxon>Bacilli</taxon>
        <taxon>Lactobacillales</taxon>
        <taxon>Lactobacillaceae</taxon>
        <taxon>Lactobacillus</taxon>
    </lineage>
</organism>
<evidence type="ECO:0000255" key="1">
    <source>
        <dbReference type="HAMAP-Rule" id="MF_00500"/>
    </source>
</evidence>
<evidence type="ECO:0000305" key="2"/>